<sequence length="255" mass="27216">MNDYIVVKCGGSMLDQLNDVFFDCIKKLQQQYKVVIVHGGGPEIDAKLKDCNINVEKRDGLRVTPKEVMDVVQMVLCGSTNKKLVMNLQKHNLLAVGCSGCDGNLLQVQPVSGEIGYVGEVSYVETALLKGLINMNYIPVIAPVGINDNEIYNINADTAAAGIAAALSAKELIFITDVDGVLHEGKLVKKTDESEIATFIEKGVITGGMIPKVQAALASLKMGVQKISIVNGTKDFTEVTGECIGTTVTKGVSIV</sequence>
<feature type="chain" id="PRO_0000335609" description="Acetylglutamate kinase">
    <location>
        <begin position="1"/>
        <end position="255"/>
    </location>
</feature>
<feature type="binding site" evidence="1">
    <location>
        <begin position="40"/>
        <end position="41"/>
    </location>
    <ligand>
        <name>substrate</name>
    </ligand>
</feature>
<feature type="binding site" evidence="1">
    <location>
        <position position="62"/>
    </location>
    <ligand>
        <name>substrate</name>
    </ligand>
</feature>
<feature type="binding site" evidence="1">
    <location>
        <position position="153"/>
    </location>
    <ligand>
        <name>substrate</name>
    </ligand>
</feature>
<feature type="site" description="Transition state stabilizer" evidence="1">
    <location>
        <position position="8"/>
    </location>
</feature>
<feature type="site" description="Transition state stabilizer" evidence="1">
    <location>
        <position position="212"/>
    </location>
</feature>
<accession>A0RID0</accession>
<gene>
    <name evidence="1" type="primary">argB</name>
    <name type="ordered locus">BALH_3745</name>
</gene>
<dbReference type="EC" id="2.7.2.8" evidence="1"/>
<dbReference type="EMBL" id="CP000485">
    <property type="protein sequence ID" value="ABK86973.1"/>
    <property type="status" value="ALT_INIT"/>
    <property type="molecule type" value="Genomic_DNA"/>
</dbReference>
<dbReference type="RefSeq" id="WP_001000898.1">
    <property type="nucleotide sequence ID" value="NC_008600.1"/>
</dbReference>
<dbReference type="SMR" id="A0RID0"/>
<dbReference type="KEGG" id="btl:BALH_3745"/>
<dbReference type="HOGENOM" id="CLU_053680_1_0_9"/>
<dbReference type="UniPathway" id="UPA00068">
    <property type="reaction ID" value="UER00107"/>
</dbReference>
<dbReference type="GO" id="GO:0005737">
    <property type="term" value="C:cytoplasm"/>
    <property type="evidence" value="ECO:0007669"/>
    <property type="project" value="UniProtKB-SubCell"/>
</dbReference>
<dbReference type="GO" id="GO:0003991">
    <property type="term" value="F:acetylglutamate kinase activity"/>
    <property type="evidence" value="ECO:0007669"/>
    <property type="project" value="UniProtKB-UniRule"/>
</dbReference>
<dbReference type="GO" id="GO:0005524">
    <property type="term" value="F:ATP binding"/>
    <property type="evidence" value="ECO:0007669"/>
    <property type="project" value="UniProtKB-UniRule"/>
</dbReference>
<dbReference type="GO" id="GO:0042450">
    <property type="term" value="P:arginine biosynthetic process via ornithine"/>
    <property type="evidence" value="ECO:0007669"/>
    <property type="project" value="UniProtKB-UniRule"/>
</dbReference>
<dbReference type="GO" id="GO:0006526">
    <property type="term" value="P:L-arginine biosynthetic process"/>
    <property type="evidence" value="ECO:0007669"/>
    <property type="project" value="UniProtKB-UniPathway"/>
</dbReference>
<dbReference type="CDD" id="cd04238">
    <property type="entry name" value="AAK_NAGK-like"/>
    <property type="match status" value="1"/>
</dbReference>
<dbReference type="FunFam" id="3.40.1160.10:FF:000034">
    <property type="entry name" value="Acetylglutamate kinase"/>
    <property type="match status" value="1"/>
</dbReference>
<dbReference type="Gene3D" id="3.40.1160.10">
    <property type="entry name" value="Acetylglutamate kinase-like"/>
    <property type="match status" value="1"/>
</dbReference>
<dbReference type="HAMAP" id="MF_00082">
    <property type="entry name" value="ArgB"/>
    <property type="match status" value="1"/>
</dbReference>
<dbReference type="InterPro" id="IPR036393">
    <property type="entry name" value="AceGlu_kinase-like_sf"/>
</dbReference>
<dbReference type="InterPro" id="IPR004662">
    <property type="entry name" value="AcgluKinase_fam"/>
</dbReference>
<dbReference type="InterPro" id="IPR037528">
    <property type="entry name" value="ArgB"/>
</dbReference>
<dbReference type="InterPro" id="IPR001048">
    <property type="entry name" value="Asp/Glu/Uridylate_kinase"/>
</dbReference>
<dbReference type="NCBIfam" id="TIGR00761">
    <property type="entry name" value="argB"/>
    <property type="match status" value="1"/>
</dbReference>
<dbReference type="PANTHER" id="PTHR23342">
    <property type="entry name" value="N-ACETYLGLUTAMATE SYNTHASE"/>
    <property type="match status" value="1"/>
</dbReference>
<dbReference type="PANTHER" id="PTHR23342:SF0">
    <property type="entry name" value="N-ACETYLGLUTAMATE SYNTHASE, MITOCHONDRIAL"/>
    <property type="match status" value="1"/>
</dbReference>
<dbReference type="Pfam" id="PF00696">
    <property type="entry name" value="AA_kinase"/>
    <property type="match status" value="1"/>
</dbReference>
<dbReference type="PIRSF" id="PIRSF000728">
    <property type="entry name" value="NAGK"/>
    <property type="match status" value="1"/>
</dbReference>
<dbReference type="SUPFAM" id="SSF53633">
    <property type="entry name" value="Carbamate kinase-like"/>
    <property type="match status" value="1"/>
</dbReference>
<keyword id="KW-0028">Amino-acid biosynthesis</keyword>
<keyword id="KW-0055">Arginine biosynthesis</keyword>
<keyword id="KW-0067">ATP-binding</keyword>
<keyword id="KW-0963">Cytoplasm</keyword>
<keyword id="KW-0418">Kinase</keyword>
<keyword id="KW-0547">Nucleotide-binding</keyword>
<keyword id="KW-0808">Transferase</keyword>
<name>ARGB_BACAH</name>
<comment type="function">
    <text evidence="1">Catalyzes the ATP-dependent phosphorylation of N-acetyl-L-glutamate.</text>
</comment>
<comment type="catalytic activity">
    <reaction evidence="1">
        <text>N-acetyl-L-glutamate + ATP = N-acetyl-L-glutamyl 5-phosphate + ADP</text>
        <dbReference type="Rhea" id="RHEA:14629"/>
        <dbReference type="ChEBI" id="CHEBI:30616"/>
        <dbReference type="ChEBI" id="CHEBI:44337"/>
        <dbReference type="ChEBI" id="CHEBI:57936"/>
        <dbReference type="ChEBI" id="CHEBI:456216"/>
        <dbReference type="EC" id="2.7.2.8"/>
    </reaction>
</comment>
<comment type="pathway">
    <text evidence="1">Amino-acid biosynthesis; L-arginine biosynthesis; N(2)-acetyl-L-ornithine from L-glutamate: step 2/4.</text>
</comment>
<comment type="subcellular location">
    <subcellularLocation>
        <location evidence="1">Cytoplasm</location>
    </subcellularLocation>
</comment>
<comment type="similarity">
    <text evidence="1">Belongs to the acetylglutamate kinase family. ArgB subfamily.</text>
</comment>
<comment type="sequence caution" evidence="2">
    <conflict type="erroneous initiation">
        <sequence resource="EMBL-CDS" id="ABK86973"/>
    </conflict>
</comment>
<reference key="1">
    <citation type="journal article" date="2007" name="J. Bacteriol.">
        <title>The complete genome sequence of Bacillus thuringiensis Al Hakam.</title>
        <authorList>
            <person name="Challacombe J.F."/>
            <person name="Altherr M.R."/>
            <person name="Xie G."/>
            <person name="Bhotika S.S."/>
            <person name="Brown N."/>
            <person name="Bruce D."/>
            <person name="Campbell C.S."/>
            <person name="Campbell M.L."/>
            <person name="Chen J."/>
            <person name="Chertkov O."/>
            <person name="Cleland C."/>
            <person name="Dimitrijevic M."/>
            <person name="Doggett N.A."/>
            <person name="Fawcett J.J."/>
            <person name="Glavina T."/>
            <person name="Goodwin L.A."/>
            <person name="Green L.D."/>
            <person name="Han C.S."/>
            <person name="Hill K.K."/>
            <person name="Hitchcock P."/>
            <person name="Jackson P.J."/>
            <person name="Keim P."/>
            <person name="Kewalramani A.R."/>
            <person name="Longmire J."/>
            <person name="Lucas S."/>
            <person name="Malfatti S."/>
            <person name="Martinez D."/>
            <person name="McMurry K."/>
            <person name="Meincke L.J."/>
            <person name="Misra M."/>
            <person name="Moseman B.L."/>
            <person name="Mundt M."/>
            <person name="Munk A.C."/>
            <person name="Okinaka R.T."/>
            <person name="Parson-Quintana B."/>
            <person name="Reilly L.P."/>
            <person name="Richardson P."/>
            <person name="Robinson D.L."/>
            <person name="Saunders E."/>
            <person name="Tapia R."/>
            <person name="Tesmer J.G."/>
            <person name="Thayer N."/>
            <person name="Thompson L.S."/>
            <person name="Tice H."/>
            <person name="Ticknor L.O."/>
            <person name="Wills P.L."/>
            <person name="Gilna P."/>
            <person name="Brettin T.S."/>
        </authorList>
    </citation>
    <scope>NUCLEOTIDE SEQUENCE [LARGE SCALE GENOMIC DNA]</scope>
    <source>
        <strain>Al Hakam</strain>
    </source>
</reference>
<organism>
    <name type="scientific">Bacillus thuringiensis (strain Al Hakam)</name>
    <dbReference type="NCBI Taxonomy" id="412694"/>
    <lineage>
        <taxon>Bacteria</taxon>
        <taxon>Bacillati</taxon>
        <taxon>Bacillota</taxon>
        <taxon>Bacilli</taxon>
        <taxon>Bacillales</taxon>
        <taxon>Bacillaceae</taxon>
        <taxon>Bacillus</taxon>
        <taxon>Bacillus cereus group</taxon>
    </lineage>
</organism>
<evidence type="ECO:0000255" key="1">
    <source>
        <dbReference type="HAMAP-Rule" id="MF_00082"/>
    </source>
</evidence>
<evidence type="ECO:0000305" key="2"/>
<proteinExistence type="inferred from homology"/>
<protein>
    <recommendedName>
        <fullName evidence="1">Acetylglutamate kinase</fullName>
        <ecNumber evidence="1">2.7.2.8</ecNumber>
    </recommendedName>
    <alternativeName>
        <fullName evidence="1">N-acetyl-L-glutamate 5-phosphotransferase</fullName>
    </alternativeName>
    <alternativeName>
        <fullName evidence="1">NAG kinase</fullName>
        <shortName evidence="1">NAGK</shortName>
    </alternativeName>
</protein>